<feature type="signal peptide" evidence="3">
    <location>
        <begin position="1"/>
        <end position="20"/>
    </location>
</feature>
<feature type="chain" id="PRO_0000007930" description="Probable endoglucanase">
    <location>
        <begin position="21"/>
        <end position="342"/>
    </location>
</feature>
<feature type="active site" description="Proton donor" evidence="1">
    <location>
        <position position="57"/>
    </location>
</feature>
<feature type="active site" description="Nucleophile" evidence="2">
    <location>
        <position position="114"/>
    </location>
</feature>
<feature type="helix" evidence="5">
    <location>
        <begin position="26"/>
        <end position="38"/>
    </location>
</feature>
<feature type="strand" evidence="5">
    <location>
        <begin position="48"/>
        <end position="51"/>
    </location>
</feature>
<feature type="strand" evidence="5">
    <location>
        <begin position="53"/>
        <end position="55"/>
    </location>
</feature>
<feature type="helix" evidence="5">
    <location>
        <begin position="56"/>
        <end position="69"/>
    </location>
</feature>
<feature type="helix" evidence="5">
    <location>
        <begin position="72"/>
        <end position="85"/>
    </location>
</feature>
<feature type="strand" evidence="5">
    <location>
        <begin position="89"/>
        <end position="92"/>
    </location>
</feature>
<feature type="strand" evidence="5">
    <location>
        <begin position="96"/>
        <end position="99"/>
    </location>
</feature>
<feature type="strand" evidence="5">
    <location>
        <begin position="102"/>
        <end position="106"/>
    </location>
</feature>
<feature type="helix" evidence="5">
    <location>
        <begin position="113"/>
        <end position="130"/>
    </location>
</feature>
<feature type="helix" evidence="5">
    <location>
        <begin position="133"/>
        <end position="150"/>
    </location>
</feature>
<feature type="strand" evidence="5">
    <location>
        <begin position="151"/>
        <end position="154"/>
    </location>
</feature>
<feature type="strand" evidence="5">
    <location>
        <begin position="157"/>
        <end position="160"/>
    </location>
</feature>
<feature type="strand" evidence="5">
    <location>
        <begin position="164"/>
        <end position="166"/>
    </location>
</feature>
<feature type="strand" evidence="5">
    <location>
        <begin position="170"/>
        <end position="175"/>
    </location>
</feature>
<feature type="helix" evidence="5">
    <location>
        <begin position="177"/>
        <end position="179"/>
    </location>
</feature>
<feature type="helix" evidence="5">
    <location>
        <begin position="182"/>
        <end position="192"/>
    </location>
</feature>
<feature type="helix" evidence="5">
    <location>
        <begin position="196"/>
        <end position="210"/>
    </location>
</feature>
<feature type="turn" evidence="5">
    <location>
        <begin position="214"/>
        <end position="217"/>
    </location>
</feature>
<feature type="strand" evidence="5">
    <location>
        <begin position="221"/>
        <end position="226"/>
    </location>
</feature>
<feature type="turn" evidence="5">
    <location>
        <begin position="227"/>
        <end position="229"/>
    </location>
</feature>
<feature type="strand" evidence="5">
    <location>
        <begin position="232"/>
        <end position="234"/>
    </location>
</feature>
<feature type="strand" evidence="5">
    <location>
        <begin position="240"/>
        <end position="242"/>
    </location>
</feature>
<feature type="turn" evidence="5">
    <location>
        <begin position="244"/>
        <end position="247"/>
    </location>
</feature>
<feature type="helix" evidence="5">
    <location>
        <begin position="248"/>
        <end position="255"/>
    </location>
</feature>
<feature type="helix" evidence="5">
    <location>
        <begin position="261"/>
        <end position="274"/>
    </location>
</feature>
<feature type="turn" evidence="5">
    <location>
        <begin position="285"/>
        <end position="287"/>
    </location>
</feature>
<feature type="strand" evidence="5">
    <location>
        <begin position="292"/>
        <end position="294"/>
    </location>
</feature>
<feature type="helix" evidence="5">
    <location>
        <begin position="297"/>
        <end position="305"/>
    </location>
</feature>
<feature type="helix" evidence="5">
    <location>
        <begin position="317"/>
        <end position="319"/>
    </location>
</feature>
<feature type="helix" evidence="5">
    <location>
        <begin position="323"/>
        <end position="339"/>
    </location>
</feature>
<gene>
    <name type="primary">cmcAX</name>
</gene>
<sequence>MSVMAAMGGAQVLSSTGAFADPAPDAVAQQWAIFRAKYLRPSGRVVDTGNGGESHSEGQGYGMLFAASAGDLASFQSMWMWARTNLQHTNDKLFSWRFLKGHQPPVPDKNNATDGDLLIALALGRAGKRFQRPDYIQDAMAIYGDVLNLMTMKAGPYVVLMPGAVGFTKKDSVILNLSYYVMPSLLQAFDLTADPRWRQVMEDGIRLVSAGRFGQWRLPPDWLAVNRATGALSIASGWPPRFSYDAIRVPLYFYWAHMLAPNVLADFTRFWNNFGANALPGWVDLTTGARSPYNAPPGYLAVAECTGLDSAGELPTLDHAPDYYSAALTLLVYIARAEETIK</sequence>
<comment type="function">
    <text>Enzyme capable of hydrolyzing carboxy-methyl-cellulose (CMC).</text>
</comment>
<comment type="catalytic activity">
    <reaction>
        <text>Endohydrolysis of (1-&gt;4)-beta-D-glucosidic linkages in cellulose, lichenin and cereal beta-D-glucans.</text>
        <dbReference type="EC" id="3.2.1.4"/>
    </reaction>
</comment>
<comment type="subcellular location">
    <subcellularLocation>
        <location>Secreted</location>
    </subcellularLocation>
</comment>
<comment type="similarity">
    <text evidence="4">Belongs to the glycosyl hydrolase 8 (cellulase D) family.</text>
</comment>
<accession>P37696</accession>
<dbReference type="EC" id="3.2.1.4"/>
<dbReference type="EMBL" id="M96060">
    <property type="protein sequence ID" value="AAA16969.1"/>
    <property type="molecule type" value="Unassigned_DNA"/>
</dbReference>
<dbReference type="PIR" id="A36963">
    <property type="entry name" value="A36963"/>
</dbReference>
<dbReference type="PDB" id="1WZZ">
    <property type="method" value="X-ray"/>
    <property type="resolution" value="1.65 A"/>
    <property type="chains" value="A=21-342"/>
</dbReference>
<dbReference type="PDBsum" id="1WZZ"/>
<dbReference type="SMR" id="P37696"/>
<dbReference type="CAZy" id="GH8">
    <property type="family name" value="Glycoside Hydrolase Family 8"/>
</dbReference>
<dbReference type="EvolutionaryTrace" id="P37696"/>
<dbReference type="GO" id="GO:0005576">
    <property type="term" value="C:extracellular region"/>
    <property type="evidence" value="ECO:0007669"/>
    <property type="project" value="UniProtKB-SubCell"/>
</dbReference>
<dbReference type="GO" id="GO:0008810">
    <property type="term" value="F:cellulase activity"/>
    <property type="evidence" value="ECO:0007669"/>
    <property type="project" value="UniProtKB-EC"/>
</dbReference>
<dbReference type="GO" id="GO:0030245">
    <property type="term" value="P:cellulose catabolic process"/>
    <property type="evidence" value="ECO:0007669"/>
    <property type="project" value="UniProtKB-KW"/>
</dbReference>
<dbReference type="Gene3D" id="1.50.10.10">
    <property type="match status" value="1"/>
</dbReference>
<dbReference type="InterPro" id="IPR008928">
    <property type="entry name" value="6-hairpin_glycosidase_sf"/>
</dbReference>
<dbReference type="InterPro" id="IPR012341">
    <property type="entry name" value="6hp_glycosidase-like_sf"/>
</dbReference>
<dbReference type="InterPro" id="IPR002037">
    <property type="entry name" value="Glyco_hydro_8"/>
</dbReference>
<dbReference type="InterPro" id="IPR019834">
    <property type="entry name" value="Glyco_hydro_8_CS"/>
</dbReference>
<dbReference type="Pfam" id="PF01270">
    <property type="entry name" value="Glyco_hydro_8"/>
    <property type="match status" value="1"/>
</dbReference>
<dbReference type="PRINTS" id="PR00735">
    <property type="entry name" value="GLHYDRLASE8"/>
</dbReference>
<dbReference type="SUPFAM" id="SSF48208">
    <property type="entry name" value="Six-hairpin glycosidases"/>
    <property type="match status" value="1"/>
</dbReference>
<dbReference type="PROSITE" id="PS00812">
    <property type="entry name" value="GLYCOSYL_HYDROL_F8"/>
    <property type="match status" value="1"/>
</dbReference>
<name>GUNA_NOVHA</name>
<keyword id="KW-0002">3D-structure</keyword>
<keyword id="KW-0119">Carbohydrate metabolism</keyword>
<keyword id="KW-0136">Cellulose degradation</keyword>
<keyword id="KW-0903">Direct protein sequencing</keyword>
<keyword id="KW-0326">Glycosidase</keyword>
<keyword id="KW-0378">Hydrolase</keyword>
<keyword id="KW-0624">Polysaccharide degradation</keyword>
<keyword id="KW-0964">Secreted</keyword>
<keyword id="KW-0732">Signal</keyword>
<protein>
    <recommendedName>
        <fullName>Probable endoglucanase</fullName>
        <ecNumber>3.2.1.4</ecNumber>
    </recommendedName>
    <alternativeName>
        <fullName>Cellulase</fullName>
    </alternativeName>
    <alternativeName>
        <fullName>Endo-1,4-beta-glucanase</fullName>
    </alternativeName>
</protein>
<evidence type="ECO:0000250" key="1"/>
<evidence type="ECO:0000255" key="2">
    <source>
        <dbReference type="PROSITE-ProRule" id="PRU10058"/>
    </source>
</evidence>
<evidence type="ECO:0000269" key="3">
    <source>
    </source>
</evidence>
<evidence type="ECO:0000305" key="4"/>
<evidence type="ECO:0007829" key="5">
    <source>
        <dbReference type="PDB" id="1WZZ"/>
    </source>
</evidence>
<reference key="1">
    <citation type="journal article" date="1994" name="J. Bacteriol.">
        <title>A new gene required for cellulose production and a gene encoding cellulolytic activity in Acetobacter xylinum are colocalized with the bcs operon.</title>
        <authorList>
            <person name="Standal R."/>
            <person name="Iversen T.-G."/>
            <person name="Coucheron D.H."/>
            <person name="Fjaervik E."/>
            <person name="Blatny J.M."/>
            <person name="Valla S."/>
        </authorList>
    </citation>
    <scope>NUCLEOTIDE SEQUENCE [GENOMIC DNA]</scope>
    <scope>PROTEIN SEQUENCE OF 21-34</scope>
    <source>
        <strain>ATCC 23769 / NCIMB 8246</strain>
    </source>
</reference>
<proteinExistence type="evidence at protein level"/>
<organism>
    <name type="scientific">Novacetimonas hansenii</name>
    <name type="common">Komagataeibacter hansenii</name>
    <dbReference type="NCBI Taxonomy" id="436"/>
    <lineage>
        <taxon>Bacteria</taxon>
        <taxon>Pseudomonadati</taxon>
        <taxon>Pseudomonadota</taxon>
        <taxon>Alphaproteobacteria</taxon>
        <taxon>Acetobacterales</taxon>
        <taxon>Acetobacteraceae</taxon>
        <taxon>Novacetimonas</taxon>
    </lineage>
</organism>